<comment type="function">
    <text evidence="1">Activates KDO (a required 8-carbon sugar) for incorporation into bacterial lipopolysaccharide in Gram-negative bacteria.</text>
</comment>
<comment type="catalytic activity">
    <reaction evidence="1">
        <text>3-deoxy-alpha-D-manno-oct-2-ulosonate + CTP = CMP-3-deoxy-beta-D-manno-octulosonate + diphosphate</text>
        <dbReference type="Rhea" id="RHEA:23448"/>
        <dbReference type="ChEBI" id="CHEBI:33019"/>
        <dbReference type="ChEBI" id="CHEBI:37563"/>
        <dbReference type="ChEBI" id="CHEBI:85986"/>
        <dbReference type="ChEBI" id="CHEBI:85987"/>
        <dbReference type="EC" id="2.7.7.38"/>
    </reaction>
</comment>
<comment type="pathway">
    <text evidence="1">Nucleotide-sugar biosynthesis; CMP-3-deoxy-D-manno-octulosonate biosynthesis; CMP-3-deoxy-D-manno-octulosonate from 3-deoxy-D-manno-octulosonate and CTP: step 1/1.</text>
</comment>
<comment type="pathway">
    <text evidence="1">Bacterial outer membrane biogenesis; lipopolysaccharide biosynthesis.</text>
</comment>
<comment type="subcellular location">
    <subcellularLocation>
        <location evidence="1">Cytoplasm</location>
    </subcellularLocation>
</comment>
<comment type="similarity">
    <text evidence="1">Belongs to the KdsB family.</text>
</comment>
<dbReference type="EC" id="2.7.7.38" evidence="1"/>
<dbReference type="EMBL" id="CP000789">
    <property type="protein sequence ID" value="ABU70508.1"/>
    <property type="molecule type" value="Genomic_DNA"/>
</dbReference>
<dbReference type="RefSeq" id="WP_012127398.1">
    <property type="nucleotide sequence ID" value="NC_022269.1"/>
</dbReference>
<dbReference type="SMR" id="A7MV12"/>
<dbReference type="KEGG" id="vha:VIBHAR_01538"/>
<dbReference type="PATRIC" id="fig|338187.25.peg.1123"/>
<dbReference type="UniPathway" id="UPA00030"/>
<dbReference type="UniPathway" id="UPA00358">
    <property type="reaction ID" value="UER00476"/>
</dbReference>
<dbReference type="Proteomes" id="UP000008152">
    <property type="component" value="Chromosome I"/>
</dbReference>
<dbReference type="GO" id="GO:0005829">
    <property type="term" value="C:cytosol"/>
    <property type="evidence" value="ECO:0007669"/>
    <property type="project" value="TreeGrafter"/>
</dbReference>
<dbReference type="GO" id="GO:0008690">
    <property type="term" value="F:3-deoxy-manno-octulosonate cytidylyltransferase activity"/>
    <property type="evidence" value="ECO:0007669"/>
    <property type="project" value="UniProtKB-UniRule"/>
</dbReference>
<dbReference type="GO" id="GO:0033468">
    <property type="term" value="P:CMP-keto-3-deoxy-D-manno-octulosonic acid biosynthetic process"/>
    <property type="evidence" value="ECO:0007669"/>
    <property type="project" value="UniProtKB-UniRule"/>
</dbReference>
<dbReference type="GO" id="GO:0009103">
    <property type="term" value="P:lipopolysaccharide biosynthetic process"/>
    <property type="evidence" value="ECO:0007669"/>
    <property type="project" value="UniProtKB-UniRule"/>
</dbReference>
<dbReference type="CDD" id="cd02517">
    <property type="entry name" value="CMP-KDO-Synthetase"/>
    <property type="match status" value="1"/>
</dbReference>
<dbReference type="FunFam" id="3.90.550.10:FF:000011">
    <property type="entry name" value="3-deoxy-manno-octulosonate cytidylyltransferase"/>
    <property type="match status" value="1"/>
</dbReference>
<dbReference type="Gene3D" id="3.90.550.10">
    <property type="entry name" value="Spore Coat Polysaccharide Biosynthesis Protein SpsA, Chain A"/>
    <property type="match status" value="1"/>
</dbReference>
<dbReference type="HAMAP" id="MF_00057">
    <property type="entry name" value="KdsB"/>
    <property type="match status" value="1"/>
</dbReference>
<dbReference type="InterPro" id="IPR003329">
    <property type="entry name" value="Cytidylyl_trans"/>
</dbReference>
<dbReference type="InterPro" id="IPR004528">
    <property type="entry name" value="KdsB"/>
</dbReference>
<dbReference type="InterPro" id="IPR029044">
    <property type="entry name" value="Nucleotide-diphossugar_trans"/>
</dbReference>
<dbReference type="NCBIfam" id="TIGR00466">
    <property type="entry name" value="kdsB"/>
    <property type="match status" value="1"/>
</dbReference>
<dbReference type="NCBIfam" id="NF003950">
    <property type="entry name" value="PRK05450.1-3"/>
    <property type="match status" value="1"/>
</dbReference>
<dbReference type="NCBIfam" id="NF003952">
    <property type="entry name" value="PRK05450.1-5"/>
    <property type="match status" value="1"/>
</dbReference>
<dbReference type="NCBIfam" id="NF009905">
    <property type="entry name" value="PRK13368.1"/>
    <property type="match status" value="1"/>
</dbReference>
<dbReference type="PANTHER" id="PTHR42866">
    <property type="entry name" value="3-DEOXY-MANNO-OCTULOSONATE CYTIDYLYLTRANSFERASE"/>
    <property type="match status" value="1"/>
</dbReference>
<dbReference type="PANTHER" id="PTHR42866:SF2">
    <property type="entry name" value="3-DEOXY-MANNO-OCTULOSONATE CYTIDYLYLTRANSFERASE, MITOCHONDRIAL"/>
    <property type="match status" value="1"/>
</dbReference>
<dbReference type="Pfam" id="PF02348">
    <property type="entry name" value="CTP_transf_3"/>
    <property type="match status" value="1"/>
</dbReference>
<dbReference type="SUPFAM" id="SSF53448">
    <property type="entry name" value="Nucleotide-diphospho-sugar transferases"/>
    <property type="match status" value="1"/>
</dbReference>
<protein>
    <recommendedName>
        <fullName evidence="1">3-deoxy-manno-octulosonate cytidylyltransferase</fullName>
        <ecNumber evidence="1">2.7.7.38</ecNumber>
    </recommendedName>
    <alternativeName>
        <fullName evidence="1">CMP-2-keto-3-deoxyoctulosonic acid synthase</fullName>
        <shortName evidence="1">CKS</shortName>
        <shortName evidence="1">CMP-KDO synthase</shortName>
    </alternativeName>
</protein>
<evidence type="ECO:0000255" key="1">
    <source>
        <dbReference type="HAMAP-Rule" id="MF_00057"/>
    </source>
</evidence>
<gene>
    <name evidence="1" type="primary">kdsB</name>
    <name type="ordered locus">VIBHAR_01538</name>
</gene>
<keyword id="KW-0963">Cytoplasm</keyword>
<keyword id="KW-0448">Lipopolysaccharide biosynthesis</keyword>
<keyword id="KW-0548">Nucleotidyltransferase</keyword>
<keyword id="KW-0808">Transferase</keyword>
<proteinExistence type="inferred from homology"/>
<sequence length="252" mass="27622">MSFTVVIPARYASSRLPGKPLADIGGKPMIQWVYEQALQAGAEDVIIATDDKRVSAAAEQFGGKVCMTSPNHESGTERLAEVVEKMAIPADHIVVNVQGDEPLIPPSIIRQVADNLAGCDAPMATLAVEIESEEEVFNPNAVKVVADERGYAMYFSRATIPWDRDNFAKQDKTIANPLMLHIGIYAYRAGFINTYVNWQPSALEQIECLEQLRVLWYGEKIHVEVAKEAPAAGVDTPEDLESVRAIVAKQAQ</sequence>
<feature type="chain" id="PRO_1000003389" description="3-deoxy-manno-octulosonate cytidylyltransferase">
    <location>
        <begin position="1"/>
        <end position="252"/>
    </location>
</feature>
<accession>A7MV12</accession>
<organism>
    <name type="scientific">Vibrio campbellii (strain ATCC BAA-1116)</name>
    <dbReference type="NCBI Taxonomy" id="2902295"/>
    <lineage>
        <taxon>Bacteria</taxon>
        <taxon>Pseudomonadati</taxon>
        <taxon>Pseudomonadota</taxon>
        <taxon>Gammaproteobacteria</taxon>
        <taxon>Vibrionales</taxon>
        <taxon>Vibrionaceae</taxon>
        <taxon>Vibrio</taxon>
    </lineage>
</organism>
<reference key="1">
    <citation type="submission" date="2007-08" db="EMBL/GenBank/DDBJ databases">
        <authorList>
            <consortium name="The Vibrio harveyi Genome Sequencing Project"/>
            <person name="Bassler B."/>
            <person name="Clifton S.W."/>
            <person name="Fulton L."/>
            <person name="Delehaunty K."/>
            <person name="Fronick C."/>
            <person name="Harrison M."/>
            <person name="Markivic C."/>
            <person name="Fulton R."/>
            <person name="Tin-Wollam A.-M."/>
            <person name="Shah N."/>
            <person name="Pepin K."/>
            <person name="Nash W."/>
            <person name="Thiruvilangam P."/>
            <person name="Bhonagiri V."/>
            <person name="Waters C."/>
            <person name="Tu K.C."/>
            <person name="Irgon J."/>
            <person name="Wilson R.K."/>
        </authorList>
    </citation>
    <scope>NUCLEOTIDE SEQUENCE [LARGE SCALE GENOMIC DNA]</scope>
    <source>
        <strain>ATCC BAA-1116 / BB120</strain>
    </source>
</reference>
<name>KDSB_VIBC1</name>